<accession>P29534</accession>
<accession>Q5FVS3</accession>
<accession>Q63669</accession>
<evidence type="ECO:0000250" key="1"/>
<evidence type="ECO:0000250" key="2">
    <source>
        <dbReference type="UniProtKB" id="P19320"/>
    </source>
</evidence>
<evidence type="ECO:0000255" key="3"/>
<evidence type="ECO:0000255" key="4">
    <source>
        <dbReference type="PROSITE-ProRule" id="PRU00114"/>
    </source>
</evidence>
<evidence type="ECO:0000269" key="5">
    <source>
    </source>
</evidence>
<evidence type="ECO:0000303" key="6">
    <source>
    </source>
</evidence>
<evidence type="ECO:0000305" key="7"/>
<name>VCAM1_RAT</name>
<feature type="signal peptide" evidence="7">
    <location>
        <begin position="1"/>
        <end position="24"/>
    </location>
</feature>
<feature type="chain" id="PRO_0000014999" description="Vascular cell adhesion protein 1">
    <location>
        <begin position="25"/>
        <end position="739"/>
    </location>
</feature>
<feature type="chain" id="PRO_0000457764" description="Soluble Vascular Cell Adhesion Molecule-1">
    <location>
        <begin position="25"/>
        <end status="unknown"/>
    </location>
</feature>
<feature type="topological domain" description="Extracellular" evidence="3">
    <location>
        <begin position="25"/>
        <end position="698"/>
    </location>
</feature>
<feature type="transmembrane region" description="Helical" evidence="3">
    <location>
        <begin position="699"/>
        <end position="720"/>
    </location>
</feature>
<feature type="topological domain" description="Cytoplasmic" evidence="3">
    <location>
        <begin position="721"/>
        <end position="739"/>
    </location>
</feature>
<feature type="domain" description="Ig-like C2-type 1">
    <location>
        <begin position="25"/>
        <end position="111"/>
    </location>
</feature>
<feature type="domain" description="Ig-like C2-type 2">
    <location>
        <begin position="119"/>
        <end position="212"/>
    </location>
</feature>
<feature type="domain" description="Ig-like C2-type 3">
    <location>
        <begin position="223"/>
        <end position="309"/>
    </location>
</feature>
<feature type="domain" description="Ig-like C2-type 4">
    <location>
        <begin position="312"/>
        <end position="397"/>
    </location>
</feature>
<feature type="domain" description="Ig-like C2-type 5">
    <location>
        <begin position="408"/>
        <end position="506"/>
    </location>
</feature>
<feature type="domain" description="Ig-like C2-type 6">
    <location>
        <begin position="514"/>
        <end position="595"/>
    </location>
</feature>
<feature type="domain" description="Ig-like C2-type 7">
    <location>
        <begin position="601"/>
        <end position="682"/>
    </location>
</feature>
<feature type="glycosylation site" description="N-linked (GlcNAc...) asparagine" evidence="3">
    <location>
        <position position="273"/>
    </location>
</feature>
<feature type="glycosylation site" description="N-linked (GlcNAc...) asparagine" evidence="3">
    <location>
        <position position="424"/>
    </location>
</feature>
<feature type="glycosylation site" description="N-linked (GlcNAc...) asparagine" evidence="3">
    <location>
        <position position="531"/>
    </location>
</feature>
<feature type="glycosylation site" description="N-linked (GlcNAc...) asparagine" evidence="3">
    <location>
        <position position="561"/>
    </location>
</feature>
<feature type="glycosylation site" description="N-linked (GlcNAc...) asparagine" evidence="3">
    <location>
        <position position="650"/>
    </location>
</feature>
<feature type="disulfide bond" evidence="4">
    <location>
        <begin position="47"/>
        <end position="95"/>
    </location>
</feature>
<feature type="disulfide bond" evidence="4">
    <location>
        <begin position="52"/>
        <end position="99"/>
    </location>
</feature>
<feature type="disulfide bond" evidence="4">
    <location>
        <begin position="137"/>
        <end position="195"/>
    </location>
</feature>
<feature type="disulfide bond" evidence="4">
    <location>
        <begin position="246"/>
        <end position="291"/>
    </location>
</feature>
<feature type="disulfide bond" evidence="4">
    <location>
        <begin position="335"/>
        <end position="383"/>
    </location>
</feature>
<feature type="disulfide bond" evidence="4">
    <location>
        <begin position="534"/>
        <end position="579"/>
    </location>
</feature>
<feature type="sequence conflict" description="In Ref. 2; CAA45254." evidence="7" ref="2">
    <original>V</original>
    <variation>G</variation>
    <location>
        <position position="3"/>
    </location>
</feature>
<feature type="sequence conflict" description="In Ref. 2; CAA45254." evidence="7" ref="2">
    <original>QF</original>
    <variation>HL</variation>
    <location>
        <begin position="122"/>
        <end position="123"/>
    </location>
</feature>
<feature type="sequence conflict" description="In Ref. 2; CAA45254." evidence="7" ref="2">
    <original>D</original>
    <variation>N</variation>
    <location>
        <position position="166"/>
    </location>
</feature>
<feature type="sequence conflict" description="In Ref. 2; CAA45254." evidence="7" ref="2">
    <original>V</original>
    <variation>G</variation>
    <location>
        <position position="739"/>
    </location>
</feature>
<proteinExistence type="evidence at protein level"/>
<keyword id="KW-0130">Cell adhesion</keyword>
<keyword id="KW-1003">Cell membrane</keyword>
<keyword id="KW-1015">Disulfide bond</keyword>
<keyword id="KW-0325">Glycoprotein</keyword>
<keyword id="KW-0945">Host-virus interaction</keyword>
<keyword id="KW-0393">Immunoglobulin domain</keyword>
<keyword id="KW-0472">Membrane</keyword>
<keyword id="KW-1185">Reference proteome</keyword>
<keyword id="KW-0677">Repeat</keyword>
<keyword id="KW-0964">Secreted</keyword>
<keyword id="KW-0732">Signal</keyword>
<keyword id="KW-0812">Transmembrane</keyword>
<keyword id="KW-1133">Transmembrane helix</keyword>
<keyword id="KW-0832">Ubl conjugation</keyword>
<reference key="1">
    <citation type="journal article" date="1992" name="Biochem. Biophys. Res. Commun.">
        <title>Cloning of murine and rat vascular cell adhesion molecule-1.</title>
        <authorList>
            <person name="Hession C."/>
            <person name="Moy P."/>
            <person name="Tizard R."/>
            <person name="Chisholm P."/>
            <person name="Williams C."/>
            <person name="Wysk M."/>
            <person name="Burkly L."/>
            <person name="Miyake K."/>
            <person name="Kincade P."/>
            <person name="Lobb R."/>
        </authorList>
    </citation>
    <scope>NUCLEOTIDE SEQUENCE [MRNA]</scope>
    <scope>TISSUE SPECIFICITY</scope>
    <source>
        <tissue>Lung</tissue>
    </source>
</reference>
<reference key="2">
    <citation type="journal article" date="1992" name="Biochim. Biophys. Acta">
        <title>Nucleotide sequence of rat vascular cell adhesion molecule-1 cDNA.</title>
        <authorList>
            <person name="Williams A.J."/>
            <person name="Atkins R.C."/>
            <person name="Fries J.W.U."/>
            <person name="Gimbrone M.A. Jr."/>
            <person name="Cybulsky M.I."/>
            <person name="Collins T."/>
        </authorList>
    </citation>
    <scope>NUCLEOTIDE SEQUENCE [MRNA]</scope>
    <source>
        <strain>Sprague-Dawley</strain>
        <tissue>Lung</tissue>
    </source>
</reference>
<reference key="3">
    <citation type="journal article" date="2004" name="Genome Res.">
        <title>The status, quality, and expansion of the NIH full-length cDNA project: the Mammalian Gene Collection (MGC).</title>
        <authorList>
            <consortium name="The MGC Project Team"/>
        </authorList>
    </citation>
    <scope>NUCLEOTIDE SEQUENCE [LARGE SCALE MRNA]</scope>
    <source>
        <tissue>Spleen</tissue>
    </source>
</reference>
<reference key="4">
    <citation type="journal article" date="2017" name="Proc. Natl. Acad. Sci. U.S.A.">
        <title>MicroRNA-10a is crucial for endothelial response to different flow patterns via interaction of retinoid acid receptors and histone deacetylases.</title>
        <authorList>
            <person name="Lee D.Y."/>
            <person name="Lin T.E."/>
            <person name="Lee C.I."/>
            <person name="Zhou J."/>
            <person name="Huang Y.H."/>
            <person name="Lee P.L."/>
            <person name="Shih Y.T."/>
            <person name="Chien S."/>
            <person name="Chiu J.J."/>
        </authorList>
    </citation>
    <scope>TISSUE SPECIFICITY</scope>
</reference>
<dbReference type="EMBL" id="M84488">
    <property type="protein sequence ID" value="AAA42332.1"/>
    <property type="molecule type" value="mRNA"/>
</dbReference>
<dbReference type="EMBL" id="X63722">
    <property type="protein sequence ID" value="CAA45254.1"/>
    <property type="molecule type" value="mRNA"/>
</dbReference>
<dbReference type="EMBL" id="BC089812">
    <property type="protein sequence ID" value="AAH89812.1"/>
    <property type="molecule type" value="mRNA"/>
</dbReference>
<dbReference type="PIR" id="JS0675">
    <property type="entry name" value="JS0675"/>
</dbReference>
<dbReference type="RefSeq" id="NP_037021.1">
    <property type="nucleotide sequence ID" value="NM_012889.2"/>
</dbReference>
<dbReference type="FunCoup" id="P29534">
    <property type="interactions" value="562"/>
</dbReference>
<dbReference type="STRING" id="10116.ENSRNOP00000071423"/>
<dbReference type="CarbonylDB" id="P29534"/>
<dbReference type="GlyCosmos" id="P29534">
    <property type="glycosylation" value="5 sites, No reported glycans"/>
</dbReference>
<dbReference type="GlyGen" id="P29534">
    <property type="glycosylation" value="5 sites"/>
</dbReference>
<dbReference type="PhosphoSitePlus" id="P29534"/>
<dbReference type="PaxDb" id="10116-ENSRNOP00000019377"/>
<dbReference type="Ensembl" id="ENSRNOT00000078806.2">
    <property type="protein sequence ID" value="ENSRNOP00000071423.1"/>
    <property type="gene ID" value="ENSRNOG00000014333.7"/>
</dbReference>
<dbReference type="GeneID" id="25361"/>
<dbReference type="KEGG" id="rno:25361"/>
<dbReference type="UCSC" id="RGD:3952">
    <property type="organism name" value="rat"/>
</dbReference>
<dbReference type="AGR" id="RGD:3952"/>
<dbReference type="CTD" id="7412"/>
<dbReference type="RGD" id="3952">
    <property type="gene designation" value="Vcam1"/>
</dbReference>
<dbReference type="eggNOG" id="ENOG502QSKQ">
    <property type="taxonomic scope" value="Eukaryota"/>
</dbReference>
<dbReference type="GeneTree" id="ENSGT00940000156511"/>
<dbReference type="InParanoid" id="P29534"/>
<dbReference type="OMA" id="TYVCEGV"/>
<dbReference type="OrthoDB" id="34022at9989"/>
<dbReference type="PhylomeDB" id="P29534"/>
<dbReference type="TreeFam" id="TF333571"/>
<dbReference type="Reactome" id="R-RNO-198933">
    <property type="pathway name" value="Immunoregulatory interactions between a Lymphoid and a non-Lymphoid cell"/>
</dbReference>
<dbReference type="Reactome" id="R-RNO-216083">
    <property type="pathway name" value="Integrin cell surface interactions"/>
</dbReference>
<dbReference type="PRO" id="PR:P29534"/>
<dbReference type="Proteomes" id="UP000002494">
    <property type="component" value="Chromosome 2"/>
</dbReference>
<dbReference type="Bgee" id="ENSRNOG00000014333">
    <property type="expression patterns" value="Expressed in spleen and 19 other cell types or tissues"/>
</dbReference>
<dbReference type="ExpressionAtlas" id="P29534">
    <property type="expression patterns" value="baseline and differential"/>
</dbReference>
<dbReference type="GO" id="GO:0071065">
    <property type="term" value="C:alpha9-beta1 integrin-vascular cell adhesion molecule-1 complex"/>
    <property type="evidence" value="ECO:0000266"/>
    <property type="project" value="RGD"/>
</dbReference>
<dbReference type="GO" id="GO:0045177">
    <property type="term" value="C:apical part of cell"/>
    <property type="evidence" value="ECO:0000266"/>
    <property type="project" value="RGD"/>
</dbReference>
<dbReference type="GO" id="GO:0016324">
    <property type="term" value="C:apical plasma membrane"/>
    <property type="evidence" value="ECO:0000266"/>
    <property type="project" value="RGD"/>
</dbReference>
<dbReference type="GO" id="GO:0071944">
    <property type="term" value="C:cell periphery"/>
    <property type="evidence" value="ECO:0000266"/>
    <property type="project" value="RGD"/>
</dbReference>
<dbReference type="GO" id="GO:0009986">
    <property type="term" value="C:cell surface"/>
    <property type="evidence" value="ECO:0000314"/>
    <property type="project" value="RGD"/>
</dbReference>
<dbReference type="GO" id="GO:0005769">
    <property type="term" value="C:early endosome"/>
    <property type="evidence" value="ECO:0000266"/>
    <property type="project" value="RGD"/>
</dbReference>
<dbReference type="GO" id="GO:0005783">
    <property type="term" value="C:endoplasmic reticulum"/>
    <property type="evidence" value="ECO:0000266"/>
    <property type="project" value="RGD"/>
</dbReference>
<dbReference type="GO" id="GO:0009897">
    <property type="term" value="C:external side of plasma membrane"/>
    <property type="evidence" value="ECO:0000266"/>
    <property type="project" value="RGD"/>
</dbReference>
<dbReference type="GO" id="GO:0005615">
    <property type="term" value="C:extracellular space"/>
    <property type="evidence" value="ECO:0000314"/>
    <property type="project" value="RGD"/>
</dbReference>
<dbReference type="GO" id="GO:0030175">
    <property type="term" value="C:filopodium"/>
    <property type="evidence" value="ECO:0000266"/>
    <property type="project" value="RGD"/>
</dbReference>
<dbReference type="GO" id="GO:0005794">
    <property type="term" value="C:Golgi apparatus"/>
    <property type="evidence" value="ECO:0000266"/>
    <property type="project" value="RGD"/>
</dbReference>
<dbReference type="GO" id="GO:0005902">
    <property type="term" value="C:microvillus"/>
    <property type="evidence" value="ECO:0000266"/>
    <property type="project" value="RGD"/>
</dbReference>
<dbReference type="GO" id="GO:0005886">
    <property type="term" value="C:plasma membrane"/>
    <property type="evidence" value="ECO:0000318"/>
    <property type="project" value="GO_Central"/>
</dbReference>
<dbReference type="GO" id="GO:0002102">
    <property type="term" value="C:podosome"/>
    <property type="evidence" value="ECO:0000266"/>
    <property type="project" value="RGD"/>
</dbReference>
<dbReference type="GO" id="GO:0042383">
    <property type="term" value="C:sarcolemma"/>
    <property type="evidence" value="ECO:0000314"/>
    <property type="project" value="RGD"/>
</dbReference>
<dbReference type="GO" id="GO:0098631">
    <property type="term" value="F:cell adhesion mediator activity"/>
    <property type="evidence" value="ECO:0000266"/>
    <property type="project" value="RGD"/>
</dbReference>
<dbReference type="GO" id="GO:0050839">
    <property type="term" value="F:cell adhesion molecule binding"/>
    <property type="evidence" value="ECO:0000266"/>
    <property type="project" value="RGD"/>
</dbReference>
<dbReference type="GO" id="GO:0005178">
    <property type="term" value="F:integrin binding"/>
    <property type="evidence" value="ECO:0000315"/>
    <property type="project" value="RGD"/>
</dbReference>
<dbReference type="GO" id="GO:0008131">
    <property type="term" value="F:primary methylamine oxidase activity"/>
    <property type="evidence" value="ECO:0000266"/>
    <property type="project" value="RGD"/>
</dbReference>
<dbReference type="GO" id="GO:0009308">
    <property type="term" value="P:amine metabolic process"/>
    <property type="evidence" value="ECO:0000266"/>
    <property type="project" value="RGD"/>
</dbReference>
<dbReference type="GO" id="GO:0060945">
    <property type="term" value="P:cardiac neuron differentiation"/>
    <property type="evidence" value="ECO:0000315"/>
    <property type="project" value="RGD"/>
</dbReference>
<dbReference type="GO" id="GO:0007155">
    <property type="term" value="P:cell adhesion"/>
    <property type="evidence" value="ECO:0000315"/>
    <property type="project" value="RGD"/>
</dbReference>
<dbReference type="GO" id="GO:0060326">
    <property type="term" value="P:cell chemotaxis"/>
    <property type="evidence" value="ECO:0000315"/>
    <property type="project" value="RGD"/>
</dbReference>
<dbReference type="GO" id="GO:0033631">
    <property type="term" value="P:cell-cell adhesion mediated by integrin"/>
    <property type="evidence" value="ECO:0000266"/>
    <property type="project" value="RGD"/>
</dbReference>
<dbReference type="GO" id="GO:0007160">
    <property type="term" value="P:cell-matrix adhesion"/>
    <property type="evidence" value="ECO:0000266"/>
    <property type="project" value="RGD"/>
</dbReference>
<dbReference type="GO" id="GO:1904646">
    <property type="term" value="P:cellular response to amyloid-beta"/>
    <property type="evidence" value="ECO:0000266"/>
    <property type="project" value="RGD"/>
</dbReference>
<dbReference type="GO" id="GO:0071333">
    <property type="term" value="P:cellular response to glucose stimulus"/>
    <property type="evidence" value="ECO:0000266"/>
    <property type="project" value="RGD"/>
</dbReference>
<dbReference type="GO" id="GO:0071356">
    <property type="term" value="P:cellular response to tumor necrosis factor"/>
    <property type="evidence" value="ECO:0000270"/>
    <property type="project" value="RGD"/>
</dbReference>
<dbReference type="GO" id="GO:0035924">
    <property type="term" value="P:cellular response to vascular endothelial growth factor stimulus"/>
    <property type="evidence" value="ECO:0000270"/>
    <property type="project" value="RGD"/>
</dbReference>
<dbReference type="GO" id="GO:0060710">
    <property type="term" value="P:chorio-allantoic fusion"/>
    <property type="evidence" value="ECO:0000266"/>
    <property type="project" value="RGD"/>
</dbReference>
<dbReference type="GO" id="GO:0002544">
    <property type="term" value="P:chronic inflammatory response"/>
    <property type="evidence" value="ECO:0000270"/>
    <property type="project" value="RGD"/>
</dbReference>
<dbReference type="GO" id="GO:0060669">
    <property type="term" value="P:embryonic placenta morphogenesis"/>
    <property type="evidence" value="ECO:0000266"/>
    <property type="project" value="RGD"/>
</dbReference>
<dbReference type="GO" id="GO:0007507">
    <property type="term" value="P:heart development"/>
    <property type="evidence" value="ECO:0000266"/>
    <property type="project" value="RGD"/>
</dbReference>
<dbReference type="GO" id="GO:0007157">
    <property type="term" value="P:heterophilic cell-cell adhesion via plasma membrane cell adhesion molecules"/>
    <property type="evidence" value="ECO:0000266"/>
    <property type="project" value="RGD"/>
</dbReference>
<dbReference type="GO" id="GO:0034113">
    <property type="term" value="P:heterotypic cell-cell adhesion"/>
    <property type="evidence" value="ECO:0000266"/>
    <property type="project" value="RGD"/>
</dbReference>
<dbReference type="GO" id="GO:0006954">
    <property type="term" value="P:inflammatory response"/>
    <property type="evidence" value="ECO:0000266"/>
    <property type="project" value="RGD"/>
</dbReference>
<dbReference type="GO" id="GO:0060384">
    <property type="term" value="P:innervation"/>
    <property type="evidence" value="ECO:0000315"/>
    <property type="project" value="RGD"/>
</dbReference>
<dbReference type="GO" id="GO:0007159">
    <property type="term" value="P:leukocyte cell-cell adhesion"/>
    <property type="evidence" value="ECO:0000266"/>
    <property type="project" value="RGD"/>
</dbReference>
<dbReference type="GO" id="GO:0050901">
    <property type="term" value="P:leukocyte tethering or rolling"/>
    <property type="evidence" value="ECO:0000266"/>
    <property type="project" value="RGD"/>
</dbReference>
<dbReference type="GO" id="GO:0022614">
    <property type="term" value="P:membrane to membrane docking"/>
    <property type="evidence" value="ECO:0000266"/>
    <property type="project" value="RGD"/>
</dbReference>
<dbReference type="GO" id="GO:0042102">
    <property type="term" value="P:positive regulation of T cell proliferation"/>
    <property type="evidence" value="ECO:0000266"/>
    <property type="project" value="RGD"/>
</dbReference>
<dbReference type="GO" id="GO:0045471">
    <property type="term" value="P:response to ethanol"/>
    <property type="evidence" value="ECO:0000270"/>
    <property type="project" value="RGD"/>
</dbReference>
<dbReference type="GO" id="GO:0001666">
    <property type="term" value="P:response to hypoxia"/>
    <property type="evidence" value="ECO:0000270"/>
    <property type="project" value="RGD"/>
</dbReference>
<dbReference type="GO" id="GO:0010212">
    <property type="term" value="P:response to ionizing radiation"/>
    <property type="evidence" value="ECO:0000270"/>
    <property type="project" value="RGD"/>
</dbReference>
<dbReference type="GO" id="GO:0032496">
    <property type="term" value="P:response to lipopolysaccharide"/>
    <property type="evidence" value="ECO:0000270"/>
    <property type="project" value="RGD"/>
</dbReference>
<dbReference type="GO" id="GO:0035094">
    <property type="term" value="P:response to nicotine"/>
    <property type="evidence" value="ECO:0000270"/>
    <property type="project" value="RGD"/>
</dbReference>
<dbReference type="GO" id="GO:0007584">
    <property type="term" value="P:response to nutrient"/>
    <property type="evidence" value="ECO:0000270"/>
    <property type="project" value="RGD"/>
</dbReference>
<dbReference type="GO" id="GO:0010043">
    <property type="term" value="P:response to zinc ion"/>
    <property type="evidence" value="ECO:0000270"/>
    <property type="project" value="RGD"/>
</dbReference>
<dbReference type="CDD" id="cd00096">
    <property type="entry name" value="Ig"/>
    <property type="match status" value="1"/>
</dbReference>
<dbReference type="CDD" id="cd20943">
    <property type="entry name" value="IgI_VCAM-1"/>
    <property type="match status" value="1"/>
</dbReference>
<dbReference type="FunFam" id="2.60.40.10:FF:000625">
    <property type="entry name" value="Vascular cell adhesion molecule 1"/>
    <property type="match status" value="2"/>
</dbReference>
<dbReference type="FunFam" id="2.60.40.10:FF:000671">
    <property type="entry name" value="Vascular cell adhesion molecule 1"/>
    <property type="match status" value="2"/>
</dbReference>
<dbReference type="FunFam" id="2.60.40.10:FF:000782">
    <property type="entry name" value="Vascular cell adhesion molecule 1"/>
    <property type="match status" value="2"/>
</dbReference>
<dbReference type="FunFam" id="2.60.40.10:FF:000817">
    <property type="entry name" value="Vascular cell adhesion molecule 1"/>
    <property type="match status" value="1"/>
</dbReference>
<dbReference type="Gene3D" id="2.60.40.10">
    <property type="entry name" value="Immunoglobulins"/>
    <property type="match status" value="7"/>
</dbReference>
<dbReference type="InterPro" id="IPR047012">
    <property type="entry name" value="ICAM_VCAM"/>
</dbReference>
<dbReference type="InterPro" id="IPR003987">
    <property type="entry name" value="ICAM_VCAM_N"/>
</dbReference>
<dbReference type="InterPro" id="IPR007110">
    <property type="entry name" value="Ig-like_dom"/>
</dbReference>
<dbReference type="InterPro" id="IPR036179">
    <property type="entry name" value="Ig-like_dom_sf"/>
</dbReference>
<dbReference type="InterPro" id="IPR013783">
    <property type="entry name" value="Ig-like_fold"/>
</dbReference>
<dbReference type="InterPro" id="IPR008424">
    <property type="entry name" value="Ig_C2-set"/>
</dbReference>
<dbReference type="InterPro" id="IPR013098">
    <property type="entry name" value="Ig_I-set"/>
</dbReference>
<dbReference type="InterPro" id="IPR003599">
    <property type="entry name" value="Ig_sub"/>
</dbReference>
<dbReference type="InterPro" id="IPR003598">
    <property type="entry name" value="Ig_sub2"/>
</dbReference>
<dbReference type="InterPro" id="IPR013151">
    <property type="entry name" value="Immunoglobulin_dom"/>
</dbReference>
<dbReference type="InterPro" id="IPR003989">
    <property type="entry name" value="VCAM-1"/>
</dbReference>
<dbReference type="PANTHER" id="PTHR13771">
    <property type="entry name" value="INTERCELLULAR ADHESION MOLECULE"/>
    <property type="match status" value="1"/>
</dbReference>
<dbReference type="PANTHER" id="PTHR13771:SF14">
    <property type="entry name" value="VASCULAR CELL ADHESION PROTEIN 1"/>
    <property type="match status" value="1"/>
</dbReference>
<dbReference type="Pfam" id="PF05790">
    <property type="entry name" value="C2-set"/>
    <property type="match status" value="2"/>
</dbReference>
<dbReference type="Pfam" id="PF07679">
    <property type="entry name" value="I-set"/>
    <property type="match status" value="2"/>
</dbReference>
<dbReference type="Pfam" id="PF00047">
    <property type="entry name" value="ig"/>
    <property type="match status" value="1"/>
</dbReference>
<dbReference type="Pfam" id="PF13927">
    <property type="entry name" value="Ig_3"/>
    <property type="match status" value="2"/>
</dbReference>
<dbReference type="PRINTS" id="PR01472">
    <property type="entry name" value="ICAMVCAM1"/>
</dbReference>
<dbReference type="PRINTS" id="PR01474">
    <property type="entry name" value="VCAM1"/>
</dbReference>
<dbReference type="SMART" id="SM00409">
    <property type="entry name" value="IG"/>
    <property type="match status" value="5"/>
</dbReference>
<dbReference type="SMART" id="SM00408">
    <property type="entry name" value="IGc2"/>
    <property type="match status" value="5"/>
</dbReference>
<dbReference type="SUPFAM" id="SSF48726">
    <property type="entry name" value="Immunoglobulin"/>
    <property type="match status" value="7"/>
</dbReference>
<dbReference type="PROSITE" id="PS50835">
    <property type="entry name" value="IG_LIKE"/>
    <property type="match status" value="5"/>
</dbReference>
<organism>
    <name type="scientific">Rattus norvegicus</name>
    <name type="common">Rat</name>
    <dbReference type="NCBI Taxonomy" id="10116"/>
    <lineage>
        <taxon>Eukaryota</taxon>
        <taxon>Metazoa</taxon>
        <taxon>Chordata</taxon>
        <taxon>Craniata</taxon>
        <taxon>Vertebrata</taxon>
        <taxon>Euteleostomi</taxon>
        <taxon>Mammalia</taxon>
        <taxon>Eutheria</taxon>
        <taxon>Euarchontoglires</taxon>
        <taxon>Glires</taxon>
        <taxon>Rodentia</taxon>
        <taxon>Myomorpha</taxon>
        <taxon>Muroidea</taxon>
        <taxon>Muridae</taxon>
        <taxon>Murinae</taxon>
        <taxon>Rattus</taxon>
    </lineage>
</organism>
<protein>
    <recommendedName>
        <fullName>Vascular cell adhesion protein 1</fullName>
        <shortName>V-CAM 1</shortName>
        <shortName>VCAM-1</shortName>
    </recommendedName>
    <cdAntigenName>CD106</cdAntigenName>
    <component>
        <recommendedName>
            <fullName>Soluble Vascular Cell Adhesion Molecule-1</fullName>
        </recommendedName>
    </component>
</protein>
<sequence>MPVKMVAIFGASTVLWILFAVSQAFKIEISPEYKTLAQIGDSMLLTCSTTGCESPSFSWRTQIDSPLNGKVKTEGAKSVLTMDPVSFENEHSYLCTATCNSGKLERGIQVDIYSFPKDPEIQFSGPLEVGKPVMVKCLAPDVYPIDRLEIELFKGDRLMKKQDFVDEMAKKSLETKSLEVIFTPVIEDIEKALVCRAKLYIDQTDSIPKERETVRELQVYTSPKNTEISVHPSTRLHEGAAVTMTCASEGLPAPEIFWSKKLDNGVLQLLSGNATLTLIAMRMEDSGIYVCEGVNLVGRDKTEVELIVQEKPFTVDISPGSQVAAQVGDSVVLTCAAVGCDSPSFSWRTQTDSPLNGEVRDEGATSTLTLSPVGVEDEHSYLCTVTCQRRKLEKTIQVEVYSFPEDPEIEISGPLVHGRPVTVNCTVPNVYPFDHLEIELLKGETTLLNKFLREEIGTKSLETKSLEMTFIPTAEDTGKALVCLAKLHSSQMESEPKQRQSTQTLYVNVAPKEPTIWVSPSPVPEEGSPVNLTCSSDGFPTPKILWSRQLKNGELQPLSQNTTLSFMATKMEDSGIYVCEGINEAGISKKSVELIIQGSSKDIQLTVFPSKSVKEGDTVIISCTCGSVPEIWIILKKKAKTGDMVLKSVNGSYTIRKAQLQDAGVYECESKTEVGSQLRSLTLDVKGKENNKDYFSPELLALYFASSLVIPAIGMIIYFARKANMKGSYSLVEAQKSKV</sequence>
<comment type="function">
    <text evidence="2">Cell adhesion glycoprotein predominantly expressed on the surface of endothelial cells that plays an important role in immune surveillance and inflammation. Acts as a major regulator of leukocyte adhesion to the endothelium through interaction with different types of integrins. During inflammatory responses, binds ligands on the surface of activated endothelial cells to initiate the activation of calcium channels and the plasma membrane-associated small GTPase RAC1 leading to leukocyte transendothelial migration. Also serves as a quality-control checkpoint for entry into bone marrow by providing a 'don't-eat-me' stamping in the context of major histocompatibility complex (MHC) class-I presentation.</text>
</comment>
<comment type="subunit">
    <text evidence="1">Binds to ECMV-D capsid proteins and acts as a receptor for this virus.</text>
</comment>
<comment type="subcellular location">
    <molecule>Vascular cell adhesion protein 1</molecule>
    <subcellularLocation>
        <location evidence="2">Cell membrane</location>
        <topology evidence="2">Single-pass type I membrane protein</topology>
    </subcellularLocation>
</comment>
<comment type="subcellular location">
    <molecule>Soluble Vascular Cell Adhesion Molecule-1</molecule>
    <subcellularLocation>
        <location evidence="2">Secreted</location>
    </subcellularLocation>
</comment>
<comment type="tissue specificity">
    <text evidence="5 6">Expressed in aortic endothelial cells, with low expression in the descending thoracic aorta and the outer curvature of the aortic arch, where pulsatory shear stress exists, and high in the inner curvature of the aortic arch, where oscillatory shear stress prevails (at protein level) (PubMed:28167758). Expressed on inflamed vascular endothelium, as well as on macrophage-like and dendritic cell types in both normal and inflamed tissue (PubMed:1371918).</text>
</comment>
<comment type="PTM">
    <text evidence="2">Cleaved by the metalloproteinase ADAM17 to generate the soluble form.</text>
</comment>
<comment type="PTM">
    <text evidence="2">Sialoglycoprotein.</text>
</comment>
<comment type="PTM">
    <text evidence="2">Ubiquitinated by TRIM65 via 'Lys-48'-linked ubiquitination; leading to proteasomal degradation.</text>
</comment>
<gene>
    <name type="primary">Vcam1</name>
    <name type="synonym">Vcam-1</name>
</gene>